<proteinExistence type="evidence at transcript level"/>
<protein>
    <recommendedName>
        <fullName>QWRF motif-containing protein 7</fullName>
    </recommendedName>
</protein>
<feature type="chain" id="PRO_0000423628" description="QWRF motif-containing protein 7">
    <location>
        <begin position="1"/>
        <end position="394"/>
    </location>
</feature>
<feature type="region of interest" description="Disordered" evidence="1">
    <location>
        <begin position="1"/>
        <end position="171"/>
    </location>
</feature>
<feature type="short sequence motif" description="QWRF motif">
    <location>
        <begin position="211"/>
        <end position="214"/>
    </location>
</feature>
<feature type="compositionally biased region" description="Low complexity" evidence="1">
    <location>
        <begin position="14"/>
        <end position="67"/>
    </location>
</feature>
<feature type="compositionally biased region" description="Polar residues" evidence="1">
    <location>
        <begin position="85"/>
        <end position="96"/>
    </location>
</feature>
<feature type="compositionally biased region" description="Basic and acidic residues" evidence="1">
    <location>
        <begin position="97"/>
        <end position="110"/>
    </location>
</feature>
<feature type="compositionally biased region" description="Polar residues" evidence="1">
    <location>
        <begin position="111"/>
        <end position="120"/>
    </location>
</feature>
<feature type="compositionally biased region" description="Polar residues" evidence="1">
    <location>
        <begin position="142"/>
        <end position="157"/>
    </location>
</feature>
<feature type="splice variant" id="VSP_053222" description="In isoform 2." evidence="2">
    <original>R</original>
    <variation>RQ</variation>
    <location>
        <position position="340"/>
    </location>
</feature>
<organism>
    <name type="scientific">Arabidopsis thaliana</name>
    <name type="common">Mouse-ear cress</name>
    <dbReference type="NCBI Taxonomy" id="3702"/>
    <lineage>
        <taxon>Eukaryota</taxon>
        <taxon>Viridiplantae</taxon>
        <taxon>Streptophyta</taxon>
        <taxon>Embryophyta</taxon>
        <taxon>Tracheophyta</taxon>
        <taxon>Spermatophyta</taxon>
        <taxon>Magnoliopsida</taxon>
        <taxon>eudicotyledons</taxon>
        <taxon>Gunneridae</taxon>
        <taxon>Pentapetalae</taxon>
        <taxon>rosids</taxon>
        <taxon>malvids</taxon>
        <taxon>Brassicales</taxon>
        <taxon>Brassicaceae</taxon>
        <taxon>Camelineae</taxon>
        <taxon>Arabidopsis</taxon>
    </lineage>
</organism>
<comment type="alternative products">
    <event type="alternative splicing"/>
    <isoform>
        <id>Q1PE51-1</id>
        <name>1</name>
        <sequence type="displayed"/>
    </isoform>
    <isoform>
        <id>Q1PE51-2</id>
        <name>2</name>
        <sequence type="described" ref="VSP_053222"/>
    </isoform>
</comment>
<comment type="similarity">
    <text evidence="2">Belongs to the QWRF family.</text>
</comment>
<comment type="sequence caution" evidence="2">
    <conflict type="erroneous gene model prediction">
        <sequence resource="EMBL-CDS" id="CAA23060"/>
    </conflict>
</comment>
<comment type="sequence caution" evidence="2">
    <conflict type="erroneous gene model prediction">
        <sequence resource="EMBL-CDS" id="CAB79428"/>
    </conflict>
</comment>
<evidence type="ECO:0000256" key="1">
    <source>
        <dbReference type="SAM" id="MobiDB-lite"/>
    </source>
</evidence>
<evidence type="ECO:0000305" key="2"/>
<accession>Q1PE51</accession>
<accession>F4JSI4</accession>
<accession>Q9SB43</accession>
<reference key="1">
    <citation type="journal article" date="1999" name="Nature">
        <title>Sequence and analysis of chromosome 4 of the plant Arabidopsis thaliana.</title>
        <authorList>
            <person name="Mayer K.F.X."/>
            <person name="Schueller C."/>
            <person name="Wambutt R."/>
            <person name="Murphy G."/>
            <person name="Volckaert G."/>
            <person name="Pohl T."/>
            <person name="Duesterhoeft A."/>
            <person name="Stiekema W."/>
            <person name="Entian K.-D."/>
            <person name="Terryn N."/>
            <person name="Harris B."/>
            <person name="Ansorge W."/>
            <person name="Brandt P."/>
            <person name="Grivell L.A."/>
            <person name="Rieger M."/>
            <person name="Weichselgartner M."/>
            <person name="de Simone V."/>
            <person name="Obermaier B."/>
            <person name="Mache R."/>
            <person name="Mueller M."/>
            <person name="Kreis M."/>
            <person name="Delseny M."/>
            <person name="Puigdomenech P."/>
            <person name="Watson M."/>
            <person name="Schmidtheini T."/>
            <person name="Reichert B."/>
            <person name="Portetelle D."/>
            <person name="Perez-Alonso M."/>
            <person name="Boutry M."/>
            <person name="Bancroft I."/>
            <person name="Vos P."/>
            <person name="Hoheisel J."/>
            <person name="Zimmermann W."/>
            <person name="Wedler H."/>
            <person name="Ridley P."/>
            <person name="Langham S.-A."/>
            <person name="McCullagh B."/>
            <person name="Bilham L."/>
            <person name="Robben J."/>
            <person name="van der Schueren J."/>
            <person name="Grymonprez B."/>
            <person name="Chuang Y.-J."/>
            <person name="Vandenbussche F."/>
            <person name="Braeken M."/>
            <person name="Weltjens I."/>
            <person name="Voet M."/>
            <person name="Bastiaens I."/>
            <person name="Aert R."/>
            <person name="Defoor E."/>
            <person name="Weitzenegger T."/>
            <person name="Bothe G."/>
            <person name="Ramsperger U."/>
            <person name="Hilbert H."/>
            <person name="Braun M."/>
            <person name="Holzer E."/>
            <person name="Brandt A."/>
            <person name="Peters S."/>
            <person name="van Staveren M."/>
            <person name="Dirkse W."/>
            <person name="Mooijman P."/>
            <person name="Klein Lankhorst R."/>
            <person name="Rose M."/>
            <person name="Hauf J."/>
            <person name="Koetter P."/>
            <person name="Berneiser S."/>
            <person name="Hempel S."/>
            <person name="Feldpausch M."/>
            <person name="Lamberth S."/>
            <person name="Van den Daele H."/>
            <person name="De Keyser A."/>
            <person name="Buysshaert C."/>
            <person name="Gielen J."/>
            <person name="Villarroel R."/>
            <person name="De Clercq R."/>
            <person name="van Montagu M."/>
            <person name="Rogers J."/>
            <person name="Cronin A."/>
            <person name="Quail M.A."/>
            <person name="Bray-Allen S."/>
            <person name="Clark L."/>
            <person name="Doggett J."/>
            <person name="Hall S."/>
            <person name="Kay M."/>
            <person name="Lennard N."/>
            <person name="McLay K."/>
            <person name="Mayes R."/>
            <person name="Pettett A."/>
            <person name="Rajandream M.A."/>
            <person name="Lyne M."/>
            <person name="Benes V."/>
            <person name="Rechmann S."/>
            <person name="Borkova D."/>
            <person name="Bloecker H."/>
            <person name="Scharfe M."/>
            <person name="Grimm M."/>
            <person name="Loehnert T.-H."/>
            <person name="Dose S."/>
            <person name="de Haan M."/>
            <person name="Maarse A.C."/>
            <person name="Schaefer M."/>
            <person name="Mueller-Auer S."/>
            <person name="Gabel C."/>
            <person name="Fuchs M."/>
            <person name="Fartmann B."/>
            <person name="Granderath K."/>
            <person name="Dauner D."/>
            <person name="Herzl A."/>
            <person name="Neumann S."/>
            <person name="Argiriou A."/>
            <person name="Vitale D."/>
            <person name="Liguori R."/>
            <person name="Piravandi E."/>
            <person name="Massenet O."/>
            <person name="Quigley F."/>
            <person name="Clabauld G."/>
            <person name="Muendlein A."/>
            <person name="Felber R."/>
            <person name="Schnabl S."/>
            <person name="Hiller R."/>
            <person name="Schmidt W."/>
            <person name="Lecharny A."/>
            <person name="Aubourg S."/>
            <person name="Chefdor F."/>
            <person name="Cooke R."/>
            <person name="Berger C."/>
            <person name="Monfort A."/>
            <person name="Casacuberta E."/>
            <person name="Gibbons T."/>
            <person name="Weber N."/>
            <person name="Vandenbol M."/>
            <person name="Bargues M."/>
            <person name="Terol J."/>
            <person name="Torres A."/>
            <person name="Perez-Perez A."/>
            <person name="Purnelle B."/>
            <person name="Bent E."/>
            <person name="Johnson S."/>
            <person name="Tacon D."/>
            <person name="Jesse T."/>
            <person name="Heijnen L."/>
            <person name="Schwarz S."/>
            <person name="Scholler P."/>
            <person name="Heber S."/>
            <person name="Francs P."/>
            <person name="Bielke C."/>
            <person name="Frishman D."/>
            <person name="Haase D."/>
            <person name="Lemcke K."/>
            <person name="Mewes H.-W."/>
            <person name="Stocker S."/>
            <person name="Zaccaria P."/>
            <person name="Bevan M."/>
            <person name="Wilson R.K."/>
            <person name="de la Bastide M."/>
            <person name="Habermann K."/>
            <person name="Parnell L."/>
            <person name="Dedhia N."/>
            <person name="Gnoj L."/>
            <person name="Schutz K."/>
            <person name="Huang E."/>
            <person name="Spiegel L."/>
            <person name="Sekhon M."/>
            <person name="Murray J."/>
            <person name="Sheet P."/>
            <person name="Cordes M."/>
            <person name="Abu-Threideh J."/>
            <person name="Stoneking T."/>
            <person name="Kalicki J."/>
            <person name="Graves T."/>
            <person name="Harmon G."/>
            <person name="Edwards J."/>
            <person name="Latreille P."/>
            <person name="Courtney L."/>
            <person name="Cloud J."/>
            <person name="Abbott A."/>
            <person name="Scott K."/>
            <person name="Johnson D."/>
            <person name="Minx P."/>
            <person name="Bentley D."/>
            <person name="Fulton B."/>
            <person name="Miller N."/>
            <person name="Greco T."/>
            <person name="Kemp K."/>
            <person name="Kramer J."/>
            <person name="Fulton L."/>
            <person name="Mardis E."/>
            <person name="Dante M."/>
            <person name="Pepin K."/>
            <person name="Hillier L.W."/>
            <person name="Nelson J."/>
            <person name="Spieth J."/>
            <person name="Ryan E."/>
            <person name="Andrews S."/>
            <person name="Geisel C."/>
            <person name="Layman D."/>
            <person name="Du H."/>
            <person name="Ali J."/>
            <person name="Berghoff A."/>
            <person name="Jones K."/>
            <person name="Drone K."/>
            <person name="Cotton M."/>
            <person name="Joshu C."/>
            <person name="Antonoiu B."/>
            <person name="Zidanic M."/>
            <person name="Strong C."/>
            <person name="Sun H."/>
            <person name="Lamar B."/>
            <person name="Yordan C."/>
            <person name="Ma P."/>
            <person name="Zhong J."/>
            <person name="Preston R."/>
            <person name="Vil D."/>
            <person name="Shekher M."/>
            <person name="Matero A."/>
            <person name="Shah R."/>
            <person name="Swaby I.K."/>
            <person name="O'Shaughnessy A."/>
            <person name="Rodriguez M."/>
            <person name="Hoffman J."/>
            <person name="Till S."/>
            <person name="Granat S."/>
            <person name="Shohdy N."/>
            <person name="Hasegawa A."/>
            <person name="Hameed A."/>
            <person name="Lodhi M."/>
            <person name="Johnson A."/>
            <person name="Chen E."/>
            <person name="Marra M.A."/>
            <person name="Martienssen R."/>
            <person name="McCombie W.R."/>
        </authorList>
    </citation>
    <scope>NUCLEOTIDE SEQUENCE [LARGE SCALE GENOMIC DNA]</scope>
    <source>
        <strain>cv. Columbia</strain>
    </source>
</reference>
<reference key="2">
    <citation type="journal article" date="2017" name="Plant J.">
        <title>Araport11: a complete reannotation of the Arabidopsis thaliana reference genome.</title>
        <authorList>
            <person name="Cheng C.Y."/>
            <person name="Krishnakumar V."/>
            <person name="Chan A.P."/>
            <person name="Thibaud-Nissen F."/>
            <person name="Schobel S."/>
            <person name="Town C.D."/>
        </authorList>
    </citation>
    <scope>GENOME REANNOTATION</scope>
    <source>
        <strain>cv. Columbia</strain>
    </source>
</reference>
<reference key="3">
    <citation type="journal article" date="2006" name="Plant Biotechnol. J.">
        <title>Simultaneous high-throughput recombinational cloning of open reading frames in closed and open configurations.</title>
        <authorList>
            <person name="Underwood B.A."/>
            <person name="Vanderhaeghen R."/>
            <person name="Whitford R."/>
            <person name="Town C.D."/>
            <person name="Hilson P."/>
        </authorList>
    </citation>
    <scope>NUCLEOTIDE SEQUENCE [LARGE SCALE MRNA] (ISOFORM 1)</scope>
    <source>
        <strain>cv. Columbia</strain>
    </source>
</reference>
<reference key="4">
    <citation type="journal article" date="2010" name="Plant Cell">
        <title>The cytoskeleton and the peroxisomal-targeted snowy cotyledon3 protein are required for chloroplast development in Arabidopsis.</title>
        <authorList>
            <person name="Albrecht V."/>
            <person name="Simkova K."/>
            <person name="Carrie C."/>
            <person name="Delannoy E."/>
            <person name="Giraud E."/>
            <person name="Whelan J."/>
            <person name="Small I.D."/>
            <person name="Apel K."/>
            <person name="Badger M.R."/>
            <person name="Pogson B.J."/>
        </authorList>
    </citation>
    <scope>GENE FAMILY</scope>
    <scope>NOMENCLATURE</scope>
</reference>
<gene>
    <name type="primary">QWRF7</name>
    <name type="ordered locus">At4g25190</name>
    <name type="ORF">F24A6.30</name>
</gene>
<keyword id="KW-0025">Alternative splicing</keyword>
<keyword id="KW-1185">Reference proteome</keyword>
<dbReference type="EMBL" id="AL035396">
    <property type="protein sequence ID" value="CAA23060.1"/>
    <property type="status" value="ALT_SEQ"/>
    <property type="molecule type" value="Genomic_DNA"/>
</dbReference>
<dbReference type="EMBL" id="AL161562">
    <property type="protein sequence ID" value="CAB79428.1"/>
    <property type="status" value="ALT_SEQ"/>
    <property type="molecule type" value="Genomic_DNA"/>
</dbReference>
<dbReference type="EMBL" id="CP002687">
    <property type="protein sequence ID" value="AEE85022.1"/>
    <property type="molecule type" value="Genomic_DNA"/>
</dbReference>
<dbReference type="EMBL" id="CP002687">
    <property type="protein sequence ID" value="AEE85023.1"/>
    <property type="molecule type" value="Genomic_DNA"/>
</dbReference>
<dbReference type="EMBL" id="DQ446867">
    <property type="protein sequence ID" value="ABE66088.1"/>
    <property type="molecule type" value="mRNA"/>
</dbReference>
<dbReference type="PIR" id="T05540">
    <property type="entry name" value="T05540"/>
</dbReference>
<dbReference type="RefSeq" id="NP_001119053.1">
    <molecule id="Q1PE51-2"/>
    <property type="nucleotide sequence ID" value="NM_001125581.2"/>
</dbReference>
<dbReference type="RefSeq" id="NP_194249.2">
    <molecule id="Q1PE51-1"/>
    <property type="nucleotide sequence ID" value="NM_118651.4"/>
</dbReference>
<dbReference type="SMR" id="Q1PE51"/>
<dbReference type="STRING" id="3702.Q1PE51"/>
<dbReference type="iPTMnet" id="Q1PE51"/>
<dbReference type="PaxDb" id="3702-AT4G25190.2"/>
<dbReference type="EnsemblPlants" id="AT4G25190.1">
    <molecule id="Q1PE51-1"/>
    <property type="protein sequence ID" value="AT4G25190.1"/>
    <property type="gene ID" value="AT4G25190"/>
</dbReference>
<dbReference type="EnsemblPlants" id="AT4G25190.2">
    <molecule id="Q1PE51-2"/>
    <property type="protein sequence ID" value="AT4G25190.2"/>
    <property type="gene ID" value="AT4G25190"/>
</dbReference>
<dbReference type="GeneID" id="828622"/>
<dbReference type="Gramene" id="AT4G25190.1">
    <molecule id="Q1PE51-1"/>
    <property type="protein sequence ID" value="AT4G25190.1"/>
    <property type="gene ID" value="AT4G25190"/>
</dbReference>
<dbReference type="Gramene" id="AT4G25190.2">
    <molecule id="Q1PE51-2"/>
    <property type="protein sequence ID" value="AT4G25190.2"/>
    <property type="gene ID" value="AT4G25190"/>
</dbReference>
<dbReference type="KEGG" id="ath:AT4G25190"/>
<dbReference type="Araport" id="AT4G25190"/>
<dbReference type="TAIR" id="AT4G25190">
    <property type="gene designation" value="QWRF7"/>
</dbReference>
<dbReference type="eggNOG" id="ENOG502QR1J">
    <property type="taxonomic scope" value="Eukaryota"/>
</dbReference>
<dbReference type="InParanoid" id="Q1PE51"/>
<dbReference type="OMA" id="EYHRFRV"/>
<dbReference type="PhylomeDB" id="Q1PE51"/>
<dbReference type="PRO" id="PR:Q1PE51"/>
<dbReference type="Proteomes" id="UP000006548">
    <property type="component" value="Chromosome 4"/>
</dbReference>
<dbReference type="ExpressionAtlas" id="Q1PE51">
    <property type="expression patterns" value="baseline and differential"/>
</dbReference>
<dbReference type="InterPro" id="IPR007573">
    <property type="entry name" value="QWRF"/>
</dbReference>
<dbReference type="PANTHER" id="PTHR31807">
    <property type="entry name" value="AUGMIN FAMILY MEMBER"/>
    <property type="match status" value="1"/>
</dbReference>
<dbReference type="PANTHER" id="PTHR31807:SF27">
    <property type="entry name" value="QWRF MOTIF-CONTAINING PROTEIN 7"/>
    <property type="match status" value="1"/>
</dbReference>
<dbReference type="Pfam" id="PF04484">
    <property type="entry name" value="QWRF"/>
    <property type="match status" value="1"/>
</dbReference>
<name>QWRF7_ARATH</name>
<sequence>MATTGRRLRPPSPNNNRSRTISSSISLPVSLNASLSSSTSSSSSSSPSNSSKRVMITRSQSTTRSSRPIGSSDSKSGENIIPARNSASRSQEINNGRSRESFARYLEQRTRGSPRSNASSRGVKPGASSPSAWALSPGRLSTMKTPLSSSAPTTSMCMTPPESPVSKAKIRSGGGGAVAGVLKYFMAQKKVSPVQEEDYHRFRIFQNRLLQWRFVNARTEATMANLKINVEDQLFWVWLRIYKMRNYVVENLIEIQRLRQDIKVREVLSLQMPLLNEWSKIDAKNSEALSKLTRKLHALSVRLPLVHGATIDMVSIHEEMVIAIEVMDEIEDVIIKFLPRVEIILYELTELIGMFNQELLYFEEMDESLLSIPLFTAKESSLRVHILQKTEEQR</sequence>